<protein>
    <recommendedName>
        <fullName>Melanoma-associated antigen B16</fullName>
    </recommendedName>
    <alternativeName>
        <fullName>MAGE-B16 antigen</fullName>
    </alternativeName>
</protein>
<evidence type="ECO:0000255" key="1">
    <source>
        <dbReference type="PROSITE-ProRule" id="PRU00127"/>
    </source>
</evidence>
<evidence type="ECO:0000256" key="2">
    <source>
        <dbReference type="SAM" id="MobiDB-lite"/>
    </source>
</evidence>
<evidence type="ECO:0000305" key="3"/>
<sequence length="363" mass="40893">MSQSSEECAADQGQTCEETQKLQVAAASIDVEEPCSSPHLMATSLKDQTSEETQVSKDVEEPCSSSQLLMASDQDDSEDETASTSSDLQHPYDSSSESTEDLDDQEVQGSPVIPPDQSDSTDLPVMTVDGKVDFLVNYMLYKYQVKEVMSMNDIMTLIVREDEDRFHEILMRASERMEMVFGLDVKEVDPINHCYALFIKLGLTYDGMRNDEYSFPKTGLLILILGVVFMKGNRATEEEIWEVLNPMGIYAGMTHFMFGDPRELITDEFVREQYLEYQPIANSDPIQYEYVWGLRAKAETSKMRVLEFVAKVHGSDPTVFLSQYEEALIEEEERTLTMLLEHADSSSTSGESSSDTSSNFSQV</sequence>
<organism>
    <name type="scientific">Mus musculus</name>
    <name type="common">Mouse</name>
    <dbReference type="NCBI Taxonomy" id="10090"/>
    <lineage>
        <taxon>Eukaryota</taxon>
        <taxon>Metazoa</taxon>
        <taxon>Chordata</taxon>
        <taxon>Craniata</taxon>
        <taxon>Vertebrata</taxon>
        <taxon>Euteleostomi</taxon>
        <taxon>Mammalia</taxon>
        <taxon>Eutheria</taxon>
        <taxon>Euarchontoglires</taxon>
        <taxon>Glires</taxon>
        <taxon>Rodentia</taxon>
        <taxon>Myomorpha</taxon>
        <taxon>Muroidea</taxon>
        <taxon>Muridae</taxon>
        <taxon>Murinae</taxon>
        <taxon>Mus</taxon>
        <taxon>Mus</taxon>
    </lineage>
</organism>
<reference key="1">
    <citation type="journal article" date="2005" name="Science">
        <title>The transcriptional landscape of the mammalian genome.</title>
        <authorList>
            <person name="Carninci P."/>
            <person name="Kasukawa T."/>
            <person name="Katayama S."/>
            <person name="Gough J."/>
            <person name="Frith M.C."/>
            <person name="Maeda N."/>
            <person name="Oyama R."/>
            <person name="Ravasi T."/>
            <person name="Lenhard B."/>
            <person name="Wells C."/>
            <person name="Kodzius R."/>
            <person name="Shimokawa K."/>
            <person name="Bajic V.B."/>
            <person name="Brenner S.E."/>
            <person name="Batalov S."/>
            <person name="Forrest A.R."/>
            <person name="Zavolan M."/>
            <person name="Davis M.J."/>
            <person name="Wilming L.G."/>
            <person name="Aidinis V."/>
            <person name="Allen J.E."/>
            <person name="Ambesi-Impiombato A."/>
            <person name="Apweiler R."/>
            <person name="Aturaliya R.N."/>
            <person name="Bailey T.L."/>
            <person name="Bansal M."/>
            <person name="Baxter L."/>
            <person name="Beisel K.W."/>
            <person name="Bersano T."/>
            <person name="Bono H."/>
            <person name="Chalk A.M."/>
            <person name="Chiu K.P."/>
            <person name="Choudhary V."/>
            <person name="Christoffels A."/>
            <person name="Clutterbuck D.R."/>
            <person name="Crowe M.L."/>
            <person name="Dalla E."/>
            <person name="Dalrymple B.P."/>
            <person name="de Bono B."/>
            <person name="Della Gatta G."/>
            <person name="di Bernardo D."/>
            <person name="Down T."/>
            <person name="Engstrom P."/>
            <person name="Fagiolini M."/>
            <person name="Faulkner G."/>
            <person name="Fletcher C.F."/>
            <person name="Fukushima T."/>
            <person name="Furuno M."/>
            <person name="Futaki S."/>
            <person name="Gariboldi M."/>
            <person name="Georgii-Hemming P."/>
            <person name="Gingeras T.R."/>
            <person name="Gojobori T."/>
            <person name="Green R.E."/>
            <person name="Gustincich S."/>
            <person name="Harbers M."/>
            <person name="Hayashi Y."/>
            <person name="Hensch T.K."/>
            <person name="Hirokawa N."/>
            <person name="Hill D."/>
            <person name="Huminiecki L."/>
            <person name="Iacono M."/>
            <person name="Ikeo K."/>
            <person name="Iwama A."/>
            <person name="Ishikawa T."/>
            <person name="Jakt M."/>
            <person name="Kanapin A."/>
            <person name="Katoh M."/>
            <person name="Kawasawa Y."/>
            <person name="Kelso J."/>
            <person name="Kitamura H."/>
            <person name="Kitano H."/>
            <person name="Kollias G."/>
            <person name="Krishnan S.P."/>
            <person name="Kruger A."/>
            <person name="Kummerfeld S.K."/>
            <person name="Kurochkin I.V."/>
            <person name="Lareau L.F."/>
            <person name="Lazarevic D."/>
            <person name="Lipovich L."/>
            <person name="Liu J."/>
            <person name="Liuni S."/>
            <person name="McWilliam S."/>
            <person name="Madan Babu M."/>
            <person name="Madera M."/>
            <person name="Marchionni L."/>
            <person name="Matsuda H."/>
            <person name="Matsuzawa S."/>
            <person name="Miki H."/>
            <person name="Mignone F."/>
            <person name="Miyake S."/>
            <person name="Morris K."/>
            <person name="Mottagui-Tabar S."/>
            <person name="Mulder N."/>
            <person name="Nakano N."/>
            <person name="Nakauchi H."/>
            <person name="Ng P."/>
            <person name="Nilsson R."/>
            <person name="Nishiguchi S."/>
            <person name="Nishikawa S."/>
            <person name="Nori F."/>
            <person name="Ohara O."/>
            <person name="Okazaki Y."/>
            <person name="Orlando V."/>
            <person name="Pang K.C."/>
            <person name="Pavan W.J."/>
            <person name="Pavesi G."/>
            <person name="Pesole G."/>
            <person name="Petrovsky N."/>
            <person name="Piazza S."/>
            <person name="Reed J."/>
            <person name="Reid J.F."/>
            <person name="Ring B.Z."/>
            <person name="Ringwald M."/>
            <person name="Rost B."/>
            <person name="Ruan Y."/>
            <person name="Salzberg S.L."/>
            <person name="Sandelin A."/>
            <person name="Schneider C."/>
            <person name="Schoenbach C."/>
            <person name="Sekiguchi K."/>
            <person name="Semple C.A."/>
            <person name="Seno S."/>
            <person name="Sessa L."/>
            <person name="Sheng Y."/>
            <person name="Shibata Y."/>
            <person name="Shimada H."/>
            <person name="Shimada K."/>
            <person name="Silva D."/>
            <person name="Sinclair B."/>
            <person name="Sperling S."/>
            <person name="Stupka E."/>
            <person name="Sugiura K."/>
            <person name="Sultana R."/>
            <person name="Takenaka Y."/>
            <person name="Taki K."/>
            <person name="Tammoja K."/>
            <person name="Tan S.L."/>
            <person name="Tang S."/>
            <person name="Taylor M.S."/>
            <person name="Tegner J."/>
            <person name="Teichmann S.A."/>
            <person name="Ueda H.R."/>
            <person name="van Nimwegen E."/>
            <person name="Verardo R."/>
            <person name="Wei C.L."/>
            <person name="Yagi K."/>
            <person name="Yamanishi H."/>
            <person name="Zabarovsky E."/>
            <person name="Zhu S."/>
            <person name="Zimmer A."/>
            <person name="Hide W."/>
            <person name="Bult C."/>
            <person name="Grimmond S.M."/>
            <person name="Teasdale R.D."/>
            <person name="Liu E.T."/>
            <person name="Brusic V."/>
            <person name="Quackenbush J."/>
            <person name="Wahlestedt C."/>
            <person name="Mattick J.S."/>
            <person name="Hume D.A."/>
            <person name="Kai C."/>
            <person name="Sasaki D."/>
            <person name="Tomaru Y."/>
            <person name="Fukuda S."/>
            <person name="Kanamori-Katayama M."/>
            <person name="Suzuki M."/>
            <person name="Aoki J."/>
            <person name="Arakawa T."/>
            <person name="Iida J."/>
            <person name="Imamura K."/>
            <person name="Itoh M."/>
            <person name="Kato T."/>
            <person name="Kawaji H."/>
            <person name="Kawagashira N."/>
            <person name="Kawashima T."/>
            <person name="Kojima M."/>
            <person name="Kondo S."/>
            <person name="Konno H."/>
            <person name="Nakano K."/>
            <person name="Ninomiya N."/>
            <person name="Nishio T."/>
            <person name="Okada M."/>
            <person name="Plessy C."/>
            <person name="Shibata K."/>
            <person name="Shiraki T."/>
            <person name="Suzuki S."/>
            <person name="Tagami M."/>
            <person name="Waki K."/>
            <person name="Watahiki A."/>
            <person name="Okamura-Oho Y."/>
            <person name="Suzuki H."/>
            <person name="Kawai J."/>
            <person name="Hayashizaki Y."/>
        </authorList>
    </citation>
    <scope>NUCLEOTIDE SEQUENCE [LARGE SCALE MRNA]</scope>
    <source>
        <strain>C57BL/6J</strain>
        <tissue>Placenta</tissue>
    </source>
</reference>
<reference key="2">
    <citation type="journal article" date="2009" name="PLoS Biol.">
        <title>Lineage-specific biology revealed by a finished genome assembly of the mouse.</title>
        <authorList>
            <person name="Church D.M."/>
            <person name="Goodstadt L."/>
            <person name="Hillier L.W."/>
            <person name="Zody M.C."/>
            <person name="Goldstein S."/>
            <person name="She X."/>
            <person name="Bult C.J."/>
            <person name="Agarwala R."/>
            <person name="Cherry J.L."/>
            <person name="DiCuccio M."/>
            <person name="Hlavina W."/>
            <person name="Kapustin Y."/>
            <person name="Meric P."/>
            <person name="Maglott D."/>
            <person name="Birtle Z."/>
            <person name="Marques A.C."/>
            <person name="Graves T."/>
            <person name="Zhou S."/>
            <person name="Teague B."/>
            <person name="Potamousis K."/>
            <person name="Churas C."/>
            <person name="Place M."/>
            <person name="Herschleb J."/>
            <person name="Runnheim R."/>
            <person name="Forrest D."/>
            <person name="Amos-Landgraf J."/>
            <person name="Schwartz D.C."/>
            <person name="Cheng Z."/>
            <person name="Lindblad-Toh K."/>
            <person name="Eichler E.E."/>
            <person name="Ponting C.P."/>
        </authorList>
    </citation>
    <scope>NUCLEOTIDE SEQUENCE [LARGE SCALE GENOMIC DNA]</scope>
    <source>
        <strain>C57BL/6J</strain>
    </source>
</reference>
<reference key="3">
    <citation type="journal article" date="2004" name="Genome Res.">
        <title>The status, quality, and expansion of the NIH full-length cDNA project: the Mammalian Gene Collection (MGC).</title>
        <authorList>
            <consortium name="The MGC Project Team"/>
        </authorList>
    </citation>
    <scope>NUCLEOTIDE SEQUENCE [LARGE SCALE MRNA]</scope>
</reference>
<proteinExistence type="evidence at transcript level"/>
<keyword id="KW-1185">Reference proteome</keyword>
<keyword id="KW-0825">Tumor antigen</keyword>
<accession>Q9CWV4</accession>
<accession>Q3TJP9</accession>
<feature type="chain" id="PRO_0000311929" description="Melanoma-associated antigen B16">
    <location>
        <begin position="1"/>
        <end position="363"/>
    </location>
</feature>
<feature type="domain" description="MAGE" evidence="1">
    <location>
        <begin position="128"/>
        <end position="327"/>
    </location>
</feature>
<feature type="region of interest" description="Disordered" evidence="2">
    <location>
        <begin position="33"/>
        <end position="124"/>
    </location>
</feature>
<feature type="region of interest" description="Disordered" evidence="2">
    <location>
        <begin position="342"/>
        <end position="363"/>
    </location>
</feature>
<feature type="compositionally biased region" description="Low complexity" evidence="2">
    <location>
        <begin position="82"/>
        <end position="97"/>
    </location>
</feature>
<feature type="sequence conflict" description="In Ref. 1; BAE39446." evidence="3" ref="1">
    <original>Q</original>
    <variation>K</variation>
    <location>
        <position position="74"/>
    </location>
</feature>
<gene>
    <name type="primary">Mageb16</name>
</gene>
<name>MAGBG_MOUSE</name>
<dbReference type="EMBL" id="AK010362">
    <property type="protein sequence ID" value="BAB26882.1"/>
    <property type="molecule type" value="mRNA"/>
</dbReference>
<dbReference type="EMBL" id="AK167347">
    <property type="protein sequence ID" value="BAE39446.1"/>
    <property type="molecule type" value="mRNA"/>
</dbReference>
<dbReference type="EMBL" id="AL808111">
    <property type="status" value="NOT_ANNOTATED_CDS"/>
    <property type="molecule type" value="Genomic_DNA"/>
</dbReference>
<dbReference type="EMBL" id="BC115695">
    <property type="protein sequence ID" value="AAI15696.1"/>
    <property type="molecule type" value="mRNA"/>
</dbReference>
<dbReference type="CCDS" id="CCDS53122.1"/>
<dbReference type="RefSeq" id="NP_001107206.1">
    <property type="nucleotide sequence ID" value="NM_001113734.1"/>
</dbReference>
<dbReference type="RefSeq" id="NP_082301.1">
    <property type="nucleotide sequence ID" value="NM_028025.1"/>
</dbReference>
<dbReference type="RefSeq" id="XP_011245985.1">
    <property type="nucleotide sequence ID" value="XM_011247683.3"/>
</dbReference>
<dbReference type="SMR" id="Q9CWV4"/>
<dbReference type="BioGRID" id="215061">
    <property type="interactions" value="1"/>
</dbReference>
<dbReference type="FunCoup" id="Q9CWV4">
    <property type="interactions" value="228"/>
</dbReference>
<dbReference type="STRING" id="10090.ENSMUSP00000087292"/>
<dbReference type="PhosphoSitePlus" id="Q9CWV4"/>
<dbReference type="PaxDb" id="10090-ENSMUSP00000109649"/>
<dbReference type="PeptideAtlas" id="Q9CWV4"/>
<dbReference type="ProteomicsDB" id="252715"/>
<dbReference type="Antibodypedia" id="64810">
    <property type="antibodies" value="57 antibodies from 11 providers"/>
</dbReference>
<dbReference type="Ensembl" id="ENSMUST00000052283.7">
    <property type="protein sequence ID" value="ENSMUSP00000087292.4"/>
    <property type="gene ID" value="ENSMUSG00000046942.18"/>
</dbReference>
<dbReference type="Ensembl" id="ENSMUST00000114016.10">
    <property type="protein sequence ID" value="ENSMUSP00000109649.4"/>
    <property type="gene ID" value="ENSMUSG00000046942.18"/>
</dbReference>
<dbReference type="GeneID" id="71967"/>
<dbReference type="KEGG" id="mmu:71967"/>
<dbReference type="UCSC" id="uc009trb.2">
    <property type="organism name" value="mouse"/>
</dbReference>
<dbReference type="AGR" id="MGI:1919217"/>
<dbReference type="CTD" id="139604"/>
<dbReference type="MGI" id="MGI:1919217">
    <property type="gene designation" value="Mageb16"/>
</dbReference>
<dbReference type="VEuPathDB" id="HostDB:ENSMUSG00000046942"/>
<dbReference type="eggNOG" id="KOG4562">
    <property type="taxonomic scope" value="Eukaryota"/>
</dbReference>
<dbReference type="GeneTree" id="ENSGT00940000162825"/>
<dbReference type="HOGENOM" id="CLU_039582_1_0_1"/>
<dbReference type="InParanoid" id="Q9CWV4"/>
<dbReference type="OMA" id="ECEDHFT"/>
<dbReference type="OrthoDB" id="205198at2759"/>
<dbReference type="PhylomeDB" id="Q9CWV4"/>
<dbReference type="TreeFam" id="TF328505"/>
<dbReference type="BioGRID-ORCS" id="71967">
    <property type="hits" value="3 hits in 77 CRISPR screens"/>
</dbReference>
<dbReference type="ChiTaRS" id="Mageb16">
    <property type="organism name" value="mouse"/>
</dbReference>
<dbReference type="PRO" id="PR:Q9CWV4"/>
<dbReference type="Proteomes" id="UP000000589">
    <property type="component" value="Chromosome X"/>
</dbReference>
<dbReference type="RNAct" id="Q9CWV4">
    <property type="molecule type" value="protein"/>
</dbReference>
<dbReference type="Bgee" id="ENSMUSG00000046942">
    <property type="expression patterns" value="Expressed in ectoplacental cone and 25 other cell types or tissues"/>
</dbReference>
<dbReference type="FunFam" id="1.10.10.1200:FF:000007">
    <property type="entry name" value="Melanoma-associated antigen C2"/>
    <property type="match status" value="1"/>
</dbReference>
<dbReference type="FunFam" id="1.10.10.1210:FF:000001">
    <property type="entry name" value="melanoma-associated antigen D1"/>
    <property type="match status" value="1"/>
</dbReference>
<dbReference type="Gene3D" id="1.10.10.1200">
    <property type="entry name" value="MAGE homology domain, winged helix WH1 motif"/>
    <property type="match status" value="1"/>
</dbReference>
<dbReference type="Gene3D" id="1.10.10.1210">
    <property type="entry name" value="MAGE homology domain, winged helix WH2 motif"/>
    <property type="match status" value="1"/>
</dbReference>
<dbReference type="InterPro" id="IPR037445">
    <property type="entry name" value="MAGE"/>
</dbReference>
<dbReference type="InterPro" id="IPR041898">
    <property type="entry name" value="MAGE_WH1"/>
</dbReference>
<dbReference type="InterPro" id="IPR041899">
    <property type="entry name" value="MAGE_WH2"/>
</dbReference>
<dbReference type="InterPro" id="IPR002190">
    <property type="entry name" value="MHD_dom"/>
</dbReference>
<dbReference type="PANTHER" id="PTHR11736:SF145">
    <property type="entry name" value="MELANOMA-ASSOCIATED ANTIGEN B16"/>
    <property type="match status" value="1"/>
</dbReference>
<dbReference type="PANTHER" id="PTHR11736">
    <property type="entry name" value="MELANOMA-ASSOCIATED ANTIGEN MAGE ANTIGEN"/>
    <property type="match status" value="1"/>
</dbReference>
<dbReference type="Pfam" id="PF01454">
    <property type="entry name" value="MAGE"/>
    <property type="match status" value="1"/>
</dbReference>
<dbReference type="SMART" id="SM01373">
    <property type="entry name" value="MAGE"/>
    <property type="match status" value="1"/>
</dbReference>
<dbReference type="PROSITE" id="PS50838">
    <property type="entry name" value="MAGE"/>
    <property type="match status" value="1"/>
</dbReference>